<organism>
    <name type="scientific">Pongo abelii</name>
    <name type="common">Sumatran orangutan</name>
    <name type="synonym">Pongo pygmaeus abelii</name>
    <dbReference type="NCBI Taxonomy" id="9601"/>
    <lineage>
        <taxon>Eukaryota</taxon>
        <taxon>Metazoa</taxon>
        <taxon>Chordata</taxon>
        <taxon>Craniata</taxon>
        <taxon>Vertebrata</taxon>
        <taxon>Euteleostomi</taxon>
        <taxon>Mammalia</taxon>
        <taxon>Eutheria</taxon>
        <taxon>Euarchontoglires</taxon>
        <taxon>Primates</taxon>
        <taxon>Haplorrhini</taxon>
        <taxon>Catarrhini</taxon>
        <taxon>Hominidae</taxon>
        <taxon>Pongo</taxon>
    </lineage>
</organism>
<sequence>MEEEDEEARALLAGGPDEADRGAPAAPGALPALCDPSRLVHRLLVLLLMCFLGFGSYFCYDNPAALQTQVKRDMQVNTTKFMLLYAWYSWSNVVLCFFGGFLIDRVFGIRWGTIIFSCFVCIGQVVFALGGIFNAFWLMEFGRFVFGIGGESLAVAQNTYAVSWFKGKELNLVFGLQLSMARIGSTVNMNLMGWLYSKIEALLGSAGHTTLGITLMIGGVTCILSLICALALAYLDQRAERILHKEQGKTGEVIKLTDVKDFSLPLWLIFIICVCYYVAVFPFIGLGKVFFTEKFGFSSQAASAINSVVYVISAPMSPVFGLLVDKTGKNIIWVLCAVAATLVSHMMLAFTMWNPWIAMCLLGLSYSLLACALWPMVAFVVPEHQLGTAHGFMQSIQNLGLAIISIIAGMILDSRGYLFLEVFFIACVSLSLLSVVLLYLVNRAQGGNLNYSARQREEIKFSHTE</sequence>
<keyword id="KW-0458">Lysosome</keyword>
<keyword id="KW-0472">Membrane</keyword>
<keyword id="KW-1185">Reference proteome</keyword>
<keyword id="KW-0812">Transmembrane</keyword>
<keyword id="KW-1133">Transmembrane helix</keyword>
<keyword id="KW-0813">Transport</keyword>
<feature type="chain" id="PRO_0000273384" description="Lysosomal dipeptide transporter MFSD1">
    <location>
        <begin position="1"/>
        <end position="465"/>
    </location>
</feature>
<feature type="transmembrane region" description="Helical" evidence="3">
    <location>
        <begin position="39"/>
        <end position="59"/>
    </location>
</feature>
<feature type="transmembrane region" description="Helical" evidence="3">
    <location>
        <begin position="83"/>
        <end position="103"/>
    </location>
</feature>
<feature type="transmembrane region" description="Helical" evidence="3">
    <location>
        <begin position="113"/>
        <end position="133"/>
    </location>
</feature>
<feature type="transmembrane region" description="Helical" evidence="3">
    <location>
        <begin position="135"/>
        <end position="155"/>
    </location>
</feature>
<feature type="transmembrane region" description="Helical" evidence="3">
    <location>
        <begin position="170"/>
        <end position="191"/>
    </location>
</feature>
<feature type="transmembrane region" description="Helical" evidence="3">
    <location>
        <begin position="213"/>
        <end position="233"/>
    </location>
</feature>
<feature type="transmembrane region" description="Helical" evidence="3">
    <location>
        <begin position="266"/>
        <end position="286"/>
    </location>
</feature>
<feature type="transmembrane region" description="Helical" evidence="3">
    <location>
        <begin position="304"/>
        <end position="324"/>
    </location>
</feature>
<feature type="transmembrane region" description="Helical" evidence="3">
    <location>
        <begin position="331"/>
        <end position="351"/>
    </location>
</feature>
<feature type="transmembrane region" description="Helical" evidence="3">
    <location>
        <begin position="361"/>
        <end position="381"/>
    </location>
</feature>
<feature type="transmembrane region" description="Helical" evidence="3">
    <location>
        <begin position="392"/>
        <end position="412"/>
    </location>
</feature>
<feature type="transmembrane region" description="Helical" evidence="3">
    <location>
        <begin position="418"/>
        <end position="438"/>
    </location>
</feature>
<feature type="region of interest" description="Disordered" evidence="4">
    <location>
        <begin position="1"/>
        <end position="23"/>
    </location>
</feature>
<feature type="short sequence motif" description="Dileucine internalization motif" evidence="1">
    <location>
        <begin position="11"/>
        <end position="12"/>
    </location>
</feature>
<comment type="function">
    <text evidence="1 2">Lysosomal dipeptide uniporter that selectively exports lysine, arginine or histidine-containing dipeptides with a net positive charge from the lysosome lumen into the cytosol. Could play a role in a specific type of protein O-glycosylation indirectly regulating macrophages migration and tissue invasion (By similarity). Also essential for liver homeostasis (By similarity).</text>
</comment>
<comment type="catalytic activity">
    <reaction evidence="2">
        <text>L-alpha-aminoacyl-L-arginine(out) = L-alpha-aminoacyl-L-arginine(in)</text>
        <dbReference type="Rhea" id="RHEA:79367"/>
        <dbReference type="ChEBI" id="CHEBI:229968"/>
    </reaction>
</comment>
<comment type="catalytic activity">
    <reaction evidence="2">
        <text>L-arginyl-L-alpha-amino acid(out) = L-arginyl-L-alpha-amino acid(in)</text>
        <dbReference type="Rhea" id="RHEA:79371"/>
        <dbReference type="ChEBI" id="CHEBI:84315"/>
    </reaction>
</comment>
<comment type="catalytic activity">
    <reaction evidence="2">
        <text>L-arginyl-glycine(out) = L-arginyl-glycine(in)</text>
        <dbReference type="Rhea" id="RHEA:79391"/>
        <dbReference type="ChEBI" id="CHEBI:229955"/>
    </reaction>
</comment>
<comment type="catalytic activity">
    <reaction evidence="2">
        <text>L-alpha-aminoacyl-L-lysine(out) = L-alpha-aminoacyl-L-lysine(in)</text>
        <dbReference type="Rhea" id="RHEA:79383"/>
        <dbReference type="ChEBI" id="CHEBI:229966"/>
    </reaction>
</comment>
<comment type="catalytic activity">
    <reaction evidence="2">
        <text>L-aspartyl-L-lysine(out) = L-aspartyl-L-lysine(in)</text>
        <dbReference type="Rhea" id="RHEA:79411"/>
        <dbReference type="ChEBI" id="CHEBI:229953"/>
    </reaction>
</comment>
<comment type="catalytic activity">
    <reaction evidence="2">
        <text>L-alanyl-L-lysine(out) = L-alanyl-L-lysine(in)</text>
        <dbReference type="Rhea" id="RHEA:79415"/>
        <dbReference type="ChEBI" id="CHEBI:192470"/>
    </reaction>
</comment>
<comment type="catalytic activity">
    <reaction evidence="2">
        <text>L-lysyl-L-alpha-amino acid(out) = L-lysyl-L-alpha-amino acid(in)</text>
        <dbReference type="Rhea" id="RHEA:79387"/>
        <dbReference type="ChEBI" id="CHEBI:229965"/>
    </reaction>
</comment>
<comment type="catalytic activity">
    <reaction evidence="2">
        <text>L-lysyl-L-alanine(out) = L-lysyl-L-alanine(in)</text>
        <dbReference type="Rhea" id="RHEA:79399"/>
        <dbReference type="ChEBI" id="CHEBI:229954"/>
    </reaction>
</comment>
<comment type="catalytic activity">
    <reaction evidence="2">
        <text>L-lysyl-L-lysine(out) = L-lysyl-L-lysine(in)</text>
        <dbReference type="Rhea" id="RHEA:79403"/>
        <dbReference type="ChEBI" id="CHEBI:229956"/>
    </reaction>
</comment>
<comment type="catalytic activity">
    <reaction evidence="2">
        <text>L-lysyl-glycine(out) = L-lysyl-glycine(in)</text>
        <dbReference type="Rhea" id="RHEA:79407"/>
        <dbReference type="ChEBI" id="CHEBI:191202"/>
    </reaction>
</comment>
<comment type="catalytic activity">
    <reaction evidence="2">
        <text>L-alpha-aminoacyl-L-histidine(out) = L-alpha-aminoacyl-L-histidine(in)</text>
        <dbReference type="Rhea" id="RHEA:79375"/>
        <dbReference type="ChEBI" id="CHEBI:229967"/>
    </reaction>
</comment>
<comment type="catalytic activity">
    <reaction evidence="2">
        <text>L-histidyl-L-alpha-amino acid(out) = L-histidyl-L-alpha-amino acid(in)</text>
        <dbReference type="Rhea" id="RHEA:79379"/>
        <dbReference type="ChEBI" id="CHEBI:229964"/>
    </reaction>
</comment>
<comment type="catalytic activity">
    <reaction evidence="2">
        <text>L-histidyl-glycine(out) = L-histidyl-glycine(in)</text>
        <dbReference type="Rhea" id="RHEA:79395"/>
        <dbReference type="ChEBI" id="CHEBI:229957"/>
    </reaction>
</comment>
<comment type="subunit">
    <text evidence="1">Homodimer. Interacts with lysosomal protein GLMP (via lumenal domain); the interaction starts while both proteins are still in the endoplasmic reticulum and is required for stabilization of MFSD1 in lysosomes but has no direct effect on its targeting to lysosomes or transporter activity.</text>
</comment>
<comment type="subcellular location">
    <subcellularLocation>
        <location evidence="1">Lysosome membrane</location>
        <topology evidence="3">Multi-pass membrane protein</topology>
    </subcellularLocation>
</comment>
<comment type="domain">
    <text evidence="1">The dileucine internalization motif is required for lysosomal localization.</text>
</comment>
<comment type="similarity">
    <text evidence="5">Belongs to the major facilitator superfamily.</text>
</comment>
<reference key="1">
    <citation type="submission" date="2004-11" db="EMBL/GenBank/DDBJ databases">
        <authorList>
            <consortium name="The German cDNA consortium"/>
        </authorList>
    </citation>
    <scope>NUCLEOTIDE SEQUENCE [LARGE SCALE MRNA]</scope>
    <source>
        <tissue>Heart</tissue>
    </source>
</reference>
<evidence type="ECO:0000250" key="1">
    <source>
        <dbReference type="UniProtKB" id="Q9DC37"/>
    </source>
</evidence>
<evidence type="ECO:0000250" key="2">
    <source>
        <dbReference type="UniProtKB" id="Q9H3U5"/>
    </source>
</evidence>
<evidence type="ECO:0000255" key="3"/>
<evidence type="ECO:0000256" key="4">
    <source>
        <dbReference type="SAM" id="MobiDB-lite"/>
    </source>
</evidence>
<evidence type="ECO:0000305" key="5"/>
<proteinExistence type="evidence at transcript level"/>
<protein>
    <recommendedName>
        <fullName evidence="2">Lysosomal dipeptide transporter MFSD1</fullName>
    </recommendedName>
    <alternativeName>
        <fullName evidence="2">Major facilitator superfamily domain-containing protein 1</fullName>
    </alternativeName>
</protein>
<accession>Q5R8G5</accession>
<gene>
    <name evidence="2" type="primary">MFSD1</name>
</gene>
<dbReference type="EMBL" id="CR859787">
    <property type="protein sequence ID" value="CAH91945.1"/>
    <property type="molecule type" value="mRNA"/>
</dbReference>
<dbReference type="RefSeq" id="NP_001127485.1">
    <property type="nucleotide sequence ID" value="NM_001134013.1"/>
</dbReference>
<dbReference type="SMR" id="Q5R8G5"/>
<dbReference type="FunCoup" id="Q5R8G5">
    <property type="interactions" value="1020"/>
</dbReference>
<dbReference type="GeneID" id="100174559"/>
<dbReference type="KEGG" id="pon:100174559"/>
<dbReference type="CTD" id="64747"/>
<dbReference type="eggNOG" id="KOG4686">
    <property type="taxonomic scope" value="Eukaryota"/>
</dbReference>
<dbReference type="InParanoid" id="Q5R8G5"/>
<dbReference type="OrthoDB" id="424834at2759"/>
<dbReference type="Proteomes" id="UP000001595">
    <property type="component" value="Unplaced"/>
</dbReference>
<dbReference type="GO" id="GO:0005765">
    <property type="term" value="C:lysosomal membrane"/>
    <property type="evidence" value="ECO:0000250"/>
    <property type="project" value="UniProtKB"/>
</dbReference>
<dbReference type="GO" id="GO:0005764">
    <property type="term" value="C:lysosome"/>
    <property type="evidence" value="ECO:0000250"/>
    <property type="project" value="UniProtKB"/>
</dbReference>
<dbReference type="GO" id="GO:0160178">
    <property type="term" value="F:dipeptide uniporter activity"/>
    <property type="evidence" value="ECO:0000250"/>
    <property type="project" value="UniProtKB"/>
</dbReference>
<dbReference type="GO" id="GO:0042803">
    <property type="term" value="F:protein homodimerization activity"/>
    <property type="evidence" value="ECO:0000250"/>
    <property type="project" value="UniProtKB"/>
</dbReference>
<dbReference type="GO" id="GO:0141204">
    <property type="term" value="P:dipeptide transmembrane transport from lysosomal lumen to cytosol"/>
    <property type="evidence" value="ECO:0000250"/>
    <property type="project" value="UniProtKB"/>
</dbReference>
<dbReference type="GO" id="GO:0061462">
    <property type="term" value="P:protein localization to lysosome"/>
    <property type="evidence" value="ECO:0000250"/>
    <property type="project" value="UniProtKB"/>
</dbReference>
<dbReference type="GO" id="GO:0050821">
    <property type="term" value="P:protein stabilization"/>
    <property type="evidence" value="ECO:0000250"/>
    <property type="project" value="UniProtKB"/>
</dbReference>
<dbReference type="CDD" id="cd17340">
    <property type="entry name" value="MFS_MFSD1"/>
    <property type="match status" value="1"/>
</dbReference>
<dbReference type="Gene3D" id="1.20.1250.20">
    <property type="entry name" value="MFS general substrate transporter like domains"/>
    <property type="match status" value="2"/>
</dbReference>
<dbReference type="InterPro" id="IPR011701">
    <property type="entry name" value="MFS"/>
</dbReference>
<dbReference type="InterPro" id="IPR020846">
    <property type="entry name" value="MFS_dom"/>
</dbReference>
<dbReference type="InterPro" id="IPR036259">
    <property type="entry name" value="MFS_trans_sf"/>
</dbReference>
<dbReference type="InterPro" id="IPR052187">
    <property type="entry name" value="MFSD1"/>
</dbReference>
<dbReference type="PANTHER" id="PTHR23512">
    <property type="entry name" value="MAJOR FACILITATOR SUPERFAMILY DOMAIN-CONTAINING PROTEIN 1"/>
    <property type="match status" value="1"/>
</dbReference>
<dbReference type="PANTHER" id="PTHR23512:SF3">
    <property type="entry name" value="MAJOR FACILITATOR SUPERFAMILY DOMAIN-CONTAINING PROTEIN 1"/>
    <property type="match status" value="1"/>
</dbReference>
<dbReference type="Pfam" id="PF07690">
    <property type="entry name" value="MFS_1"/>
    <property type="match status" value="1"/>
</dbReference>
<dbReference type="SUPFAM" id="SSF103473">
    <property type="entry name" value="MFS general substrate transporter"/>
    <property type="match status" value="1"/>
</dbReference>
<dbReference type="PROSITE" id="PS50850">
    <property type="entry name" value="MFS"/>
    <property type="match status" value="1"/>
</dbReference>
<name>MFSD1_PONAB</name>